<comment type="function">
    <text evidence="3 6 10 12">The catalytic subunit of the gastric H(+)/K(+) ATPase pump which transports H(+) ions in exchange for K(+) ions across the apical membrane of parietal cells (PubMed:10722662, PubMed:24188822). Uses ATP as an energy source to pump H(+) ions to the gastric lumen while transporting K(+) ion from the lumen into the cell (PubMed:10722662, PubMed:24188822). Remarkably generates a million-fold proton gradient across the gastric parietal cell membrane, acidifying the gastric juice down to pH 1 (By similarity). Within a transport cycle, the transfer of a H(+) ion across the membrane is coupled to ATP hydrolysis and is associated with a transient phosphorylation that shifts the pump conformation from inward-facing (E1) to outward-facing state (E2). The release of the H(+) ion in the stomach lumen is followed by binding of K(+) ion converting the pump conformation back to the E1 state (By similarity) (PubMed:10722662, PubMed:24188822).</text>
</comment>
<comment type="catalytic activity">
    <reaction evidence="12 15">
        <text>K(+)(out) + ATP + H2O + H(+)(in) = K(+)(in) + ADP + phosphate + 2 H(+)(out)</text>
        <dbReference type="Rhea" id="RHEA:22044"/>
        <dbReference type="ChEBI" id="CHEBI:15377"/>
        <dbReference type="ChEBI" id="CHEBI:15378"/>
        <dbReference type="ChEBI" id="CHEBI:29103"/>
        <dbReference type="ChEBI" id="CHEBI:30616"/>
        <dbReference type="ChEBI" id="CHEBI:43474"/>
        <dbReference type="ChEBI" id="CHEBI:456216"/>
        <dbReference type="EC" id="7.2.2.19"/>
    </reaction>
    <physiologicalReaction direction="left-to-right" evidence="15 16">
        <dbReference type="Rhea" id="RHEA:22045"/>
    </physiologicalReaction>
</comment>
<comment type="subunit">
    <text evidence="3 10 11">The gastric H(+)/K(+) ATPase pump is composed of the catalytic alpha subunit ATP4A and the regulatory beta subunit ATP4B (PubMed:10722662, PubMed:11909858). Interacts (via the P-domain) with ATP4B (via N-terminus); this interaction stabilizes the lumenal-open E2 conformation state and prevents the reverse reaction of the transport cycle (By similarity).</text>
</comment>
<comment type="subcellular location">
    <subcellularLocation>
        <location>Apical cell membrane</location>
        <topology evidence="4">Multi-pass membrane protein</topology>
    </subcellularLocation>
    <subcellularLocation>
        <location evidence="10">Cell membrane</location>
        <topology evidence="8">Multi-pass membrane protein</topology>
    </subcellularLocation>
    <text evidence="4">Localized in the apical canalicular membrane of parietal cells.</text>
</comment>
<comment type="similarity">
    <text evidence="14">Belongs to the cation transport ATPase (P-type) (TC 3.A.3) family. Type IIC subfamily.</text>
</comment>
<proteinExistence type="evidence at protein level"/>
<organism>
    <name type="scientific">Oryctolagus cuniculus</name>
    <name type="common">Rabbit</name>
    <dbReference type="NCBI Taxonomy" id="9986"/>
    <lineage>
        <taxon>Eukaryota</taxon>
        <taxon>Metazoa</taxon>
        <taxon>Chordata</taxon>
        <taxon>Craniata</taxon>
        <taxon>Vertebrata</taxon>
        <taxon>Euteleostomi</taxon>
        <taxon>Mammalia</taxon>
        <taxon>Eutheria</taxon>
        <taxon>Euarchontoglires</taxon>
        <taxon>Glires</taxon>
        <taxon>Lagomorpha</taxon>
        <taxon>Leporidae</taxon>
        <taxon>Oryctolagus</taxon>
    </lineage>
</organism>
<dbReference type="EC" id="7.2.2.19" evidence="12"/>
<dbReference type="EMBL" id="X64694">
    <property type="protein sequence ID" value="CAA45927.1"/>
    <property type="molecule type" value="mRNA"/>
</dbReference>
<dbReference type="PIR" id="S23406">
    <property type="entry name" value="S23406"/>
</dbReference>
<dbReference type="RefSeq" id="NP_001095171.1">
    <property type="nucleotide sequence ID" value="NM_001101701.1"/>
</dbReference>
<dbReference type="SMR" id="P27112"/>
<dbReference type="BioGRID" id="1172300">
    <property type="interactions" value="1"/>
</dbReference>
<dbReference type="FunCoup" id="P27112">
    <property type="interactions" value="51"/>
</dbReference>
<dbReference type="STRING" id="9986.ENSOCUP00000024135"/>
<dbReference type="DrugCentral" id="P27112"/>
<dbReference type="PaxDb" id="9986-ENSOCUP00000024135"/>
<dbReference type="GeneID" id="100009279"/>
<dbReference type="KEGG" id="ocu:100009279"/>
<dbReference type="CTD" id="495"/>
<dbReference type="eggNOG" id="KOG0203">
    <property type="taxonomic scope" value="Eukaryota"/>
</dbReference>
<dbReference type="InParanoid" id="P27112"/>
<dbReference type="OrthoDB" id="158672at2759"/>
<dbReference type="BRENDA" id="7.2.2.19">
    <property type="organism ID" value="1749"/>
</dbReference>
<dbReference type="Proteomes" id="UP000001811">
    <property type="component" value="Unplaced"/>
</dbReference>
<dbReference type="GO" id="GO:0016324">
    <property type="term" value="C:apical plasma membrane"/>
    <property type="evidence" value="ECO:0007669"/>
    <property type="project" value="UniProtKB-SubCell"/>
</dbReference>
<dbReference type="GO" id="GO:0005524">
    <property type="term" value="F:ATP binding"/>
    <property type="evidence" value="ECO:0007669"/>
    <property type="project" value="UniProtKB-KW"/>
</dbReference>
<dbReference type="GO" id="GO:0016887">
    <property type="term" value="F:ATP hydrolysis activity"/>
    <property type="evidence" value="ECO:0007669"/>
    <property type="project" value="InterPro"/>
</dbReference>
<dbReference type="GO" id="GO:0000287">
    <property type="term" value="F:magnesium ion binding"/>
    <property type="evidence" value="ECO:0000250"/>
    <property type="project" value="UniProtKB"/>
</dbReference>
<dbReference type="GO" id="GO:0008900">
    <property type="term" value="F:P-type potassium:proton transporter activity"/>
    <property type="evidence" value="ECO:0007669"/>
    <property type="project" value="UniProtKB-EC"/>
</dbReference>
<dbReference type="GO" id="GO:0005391">
    <property type="term" value="F:P-type sodium:potassium-exchanging transporter activity"/>
    <property type="evidence" value="ECO:0007669"/>
    <property type="project" value="TreeGrafter"/>
</dbReference>
<dbReference type="GO" id="GO:0030955">
    <property type="term" value="F:potassium ion binding"/>
    <property type="evidence" value="ECO:0000250"/>
    <property type="project" value="UniProtKB"/>
</dbReference>
<dbReference type="GO" id="GO:0030007">
    <property type="term" value="P:intracellular potassium ion homeostasis"/>
    <property type="evidence" value="ECO:0007669"/>
    <property type="project" value="TreeGrafter"/>
</dbReference>
<dbReference type="GO" id="GO:0006883">
    <property type="term" value="P:intracellular sodium ion homeostasis"/>
    <property type="evidence" value="ECO:0007669"/>
    <property type="project" value="TreeGrafter"/>
</dbReference>
<dbReference type="GO" id="GO:1990573">
    <property type="term" value="P:potassium ion import across plasma membrane"/>
    <property type="evidence" value="ECO:0007669"/>
    <property type="project" value="TreeGrafter"/>
</dbReference>
<dbReference type="GO" id="GO:0036376">
    <property type="term" value="P:sodium ion export across plasma membrane"/>
    <property type="evidence" value="ECO:0007669"/>
    <property type="project" value="TreeGrafter"/>
</dbReference>
<dbReference type="CDD" id="cd02608">
    <property type="entry name" value="P-type_ATPase_Na-K_like"/>
    <property type="match status" value="1"/>
</dbReference>
<dbReference type="FunFam" id="3.40.50.1000:FF:000001">
    <property type="entry name" value="Phospholipid-transporting ATPase IC"/>
    <property type="match status" value="1"/>
</dbReference>
<dbReference type="FunFam" id="1.20.1110.10:FF:000079">
    <property type="entry name" value="Sodium/potassium-transporting ATPase subunit alpha"/>
    <property type="match status" value="1"/>
</dbReference>
<dbReference type="FunFam" id="2.70.150.10:FF:000003">
    <property type="entry name" value="Sodium/potassium-transporting ATPase subunit alpha"/>
    <property type="match status" value="1"/>
</dbReference>
<dbReference type="FunFam" id="3.40.1110.10:FF:000001">
    <property type="entry name" value="Sodium/potassium-transporting ATPase subunit alpha"/>
    <property type="match status" value="1"/>
</dbReference>
<dbReference type="FunFam" id="3.40.50.1000:FF:000004">
    <property type="entry name" value="Sodium/potassium-transporting ATPase subunit alpha"/>
    <property type="match status" value="1"/>
</dbReference>
<dbReference type="FunFam" id="1.20.1110.10:FF:000095">
    <property type="entry name" value="Sodium/potassium-transporting ATPase subunit alpha-1"/>
    <property type="match status" value="1"/>
</dbReference>
<dbReference type="Gene3D" id="3.40.1110.10">
    <property type="entry name" value="Calcium-transporting ATPase, cytoplasmic domain N"/>
    <property type="match status" value="1"/>
</dbReference>
<dbReference type="Gene3D" id="2.70.150.10">
    <property type="entry name" value="Calcium-transporting ATPase, cytoplasmic transduction domain A"/>
    <property type="match status" value="1"/>
</dbReference>
<dbReference type="Gene3D" id="1.20.1110.10">
    <property type="entry name" value="Calcium-transporting ATPase, transmembrane domain"/>
    <property type="match status" value="1"/>
</dbReference>
<dbReference type="Gene3D" id="3.40.50.1000">
    <property type="entry name" value="HAD superfamily/HAD-like"/>
    <property type="match status" value="1"/>
</dbReference>
<dbReference type="InterPro" id="IPR006068">
    <property type="entry name" value="ATPase_P-typ_cation-transptr_C"/>
</dbReference>
<dbReference type="InterPro" id="IPR004014">
    <property type="entry name" value="ATPase_P-typ_cation-transptr_N"/>
</dbReference>
<dbReference type="InterPro" id="IPR023299">
    <property type="entry name" value="ATPase_P-typ_cyto_dom_N"/>
</dbReference>
<dbReference type="InterPro" id="IPR015127">
    <property type="entry name" value="ATPase_P-typ_H/K-transp_N"/>
</dbReference>
<dbReference type="InterPro" id="IPR018303">
    <property type="entry name" value="ATPase_P-typ_P_site"/>
</dbReference>
<dbReference type="InterPro" id="IPR023298">
    <property type="entry name" value="ATPase_P-typ_TM_dom_sf"/>
</dbReference>
<dbReference type="InterPro" id="IPR008250">
    <property type="entry name" value="ATPase_P-typ_transduc_dom_A_sf"/>
</dbReference>
<dbReference type="InterPro" id="IPR050510">
    <property type="entry name" value="Cation_transp_ATPase_P-type"/>
</dbReference>
<dbReference type="InterPro" id="IPR036412">
    <property type="entry name" value="HAD-like_sf"/>
</dbReference>
<dbReference type="InterPro" id="IPR023214">
    <property type="entry name" value="HAD_sf"/>
</dbReference>
<dbReference type="InterPro" id="IPR005775">
    <property type="entry name" value="P-type_ATPase_IIC"/>
</dbReference>
<dbReference type="InterPro" id="IPR001757">
    <property type="entry name" value="P_typ_ATPase"/>
</dbReference>
<dbReference type="InterPro" id="IPR044492">
    <property type="entry name" value="P_typ_ATPase_HD_dom"/>
</dbReference>
<dbReference type="NCBIfam" id="TIGR01106">
    <property type="entry name" value="ATPase-IIC_X-K"/>
    <property type="match status" value="1"/>
</dbReference>
<dbReference type="NCBIfam" id="TIGR01494">
    <property type="entry name" value="ATPase_P-type"/>
    <property type="match status" value="2"/>
</dbReference>
<dbReference type="PANTHER" id="PTHR43294:SF10">
    <property type="entry name" value="POTASSIUM-TRANSPORTING ATPASE ALPHA CHAIN 1"/>
    <property type="match status" value="1"/>
</dbReference>
<dbReference type="PANTHER" id="PTHR43294">
    <property type="entry name" value="SODIUM/POTASSIUM-TRANSPORTING ATPASE SUBUNIT ALPHA"/>
    <property type="match status" value="1"/>
</dbReference>
<dbReference type="Pfam" id="PF13246">
    <property type="entry name" value="Cation_ATPase"/>
    <property type="match status" value="1"/>
</dbReference>
<dbReference type="Pfam" id="PF00689">
    <property type="entry name" value="Cation_ATPase_C"/>
    <property type="match status" value="1"/>
</dbReference>
<dbReference type="Pfam" id="PF00690">
    <property type="entry name" value="Cation_ATPase_N"/>
    <property type="match status" value="1"/>
</dbReference>
<dbReference type="Pfam" id="PF00122">
    <property type="entry name" value="E1-E2_ATPase"/>
    <property type="match status" value="1"/>
</dbReference>
<dbReference type="Pfam" id="PF09040">
    <property type="entry name" value="H-K_ATPase_N"/>
    <property type="match status" value="1"/>
</dbReference>
<dbReference type="Pfam" id="PF00702">
    <property type="entry name" value="Hydrolase"/>
    <property type="match status" value="1"/>
</dbReference>
<dbReference type="PRINTS" id="PR00119">
    <property type="entry name" value="CATATPASE"/>
</dbReference>
<dbReference type="PRINTS" id="PR00121">
    <property type="entry name" value="NAKATPASE"/>
</dbReference>
<dbReference type="SFLD" id="SFLDS00003">
    <property type="entry name" value="Haloacid_Dehalogenase"/>
    <property type="match status" value="1"/>
</dbReference>
<dbReference type="SFLD" id="SFLDF00027">
    <property type="entry name" value="p-type_atpase"/>
    <property type="match status" value="1"/>
</dbReference>
<dbReference type="SMART" id="SM00831">
    <property type="entry name" value="Cation_ATPase_N"/>
    <property type="match status" value="1"/>
</dbReference>
<dbReference type="SUPFAM" id="SSF81653">
    <property type="entry name" value="Calcium ATPase, transduction domain A"/>
    <property type="match status" value="1"/>
</dbReference>
<dbReference type="SUPFAM" id="SSF81665">
    <property type="entry name" value="Calcium ATPase, transmembrane domain M"/>
    <property type="match status" value="1"/>
</dbReference>
<dbReference type="SUPFAM" id="SSF56784">
    <property type="entry name" value="HAD-like"/>
    <property type="match status" value="1"/>
</dbReference>
<dbReference type="SUPFAM" id="SSF81660">
    <property type="entry name" value="Metal cation-transporting ATPase, ATP-binding domain N"/>
    <property type="match status" value="1"/>
</dbReference>
<dbReference type="PROSITE" id="PS00154">
    <property type="entry name" value="ATPASE_E1_E2"/>
    <property type="match status" value="1"/>
</dbReference>
<reference key="1">
    <citation type="journal article" date="1992" name="Biochim. Biophys. Acta">
        <title>cDNA cloning and membrane topology of the rabbit gastric H+/K(+)-ATPase alpha-subunit.</title>
        <authorList>
            <person name="Bamberg K."/>
            <person name="Mercier F."/>
            <person name="Reuben M.A."/>
            <person name="Kobayashi Y."/>
            <person name="Munson K.B."/>
            <person name="Sachs G."/>
        </authorList>
    </citation>
    <scope>NUCLEOTIDE SEQUENCE [MRNA]</scope>
    <source>
        <strain>New Zealand white</strain>
    </source>
</reference>
<reference key="2">
    <citation type="journal article" date="2000" name="J. Biol. Chem.">
        <title>The roles of carbohydrate chains of the beta-subunit on the functional expression of gastric H(+),K(+)-ATPase.</title>
        <authorList>
            <person name="Asano S."/>
            <person name="Kawada K."/>
            <person name="Kimura T."/>
            <person name="Grishin A.V."/>
            <person name="Caplan M.J."/>
            <person name="Takeguchi N."/>
        </authorList>
    </citation>
    <scope>FUNCTION</scope>
    <scope>CATALYTIC ACTIVITY</scope>
    <scope>INTERACTION WITH ATP4B</scope>
    <scope>SUBCELLULAR LOCATION</scope>
</reference>
<reference key="3">
    <citation type="journal article" date="2002" name="J. Biol. Chem.">
        <title>Mutational study on the roles of disulfide bonds in the beta-subunit of gastric H+,K+-ATPase.</title>
        <authorList>
            <person name="Kimura T."/>
            <person name="Tabuchi Y."/>
            <person name="Takeguchi N."/>
            <person name="Asano S."/>
        </authorList>
    </citation>
    <scope>INTERACTION WITH ATP4B</scope>
</reference>
<reference key="4">
    <citation type="journal article" date="2013" name="FEBS Lett.">
        <title>Modulation of H(+),K(+)-ATPase activity by the molecular chaperone ERp57 highly expressed in gastric parietal cells.</title>
        <authorList>
            <person name="Fujii T."/>
            <person name="Awaka S.Y."/>
            <person name="Takahashi Y."/>
            <person name="Fujita K."/>
            <person name="Tsuji H."/>
            <person name="Shimizu T."/>
            <person name="Gomi T."/>
            <person name="Tsukada K."/>
            <person name="Sakai H."/>
        </authorList>
    </citation>
    <scope>FUNCTION</scope>
    <scope>CATALYTIC ACTIVITY</scope>
</reference>
<feature type="chain" id="PRO_0000046256" description="Potassium-transporting ATPase alpha chain 1">
    <location>
        <begin position="1"/>
        <end position="1035"/>
    </location>
</feature>
<feature type="topological domain" description="Cytoplasmic" evidence="8">
    <location>
        <begin position="1"/>
        <end position="98"/>
    </location>
</feature>
<feature type="transmembrane region" description="Helical" evidence="8">
    <location>
        <begin position="99"/>
        <end position="119"/>
    </location>
</feature>
<feature type="topological domain" description="Lumenal" evidence="8">
    <location>
        <begin position="120"/>
        <end position="142"/>
    </location>
</feature>
<feature type="transmembrane region" description="Helical" evidence="8">
    <location>
        <begin position="143"/>
        <end position="163"/>
    </location>
</feature>
<feature type="topological domain" description="Cytoplasmic" evidence="8">
    <location>
        <begin position="164"/>
        <end position="299"/>
    </location>
</feature>
<feature type="transmembrane region" description="Helical" evidence="8">
    <location>
        <begin position="300"/>
        <end position="319"/>
    </location>
</feature>
<feature type="topological domain" description="Lumenal" evidence="8">
    <location>
        <begin position="320"/>
        <end position="331"/>
    </location>
</feature>
<feature type="transmembrane region" description="Helical" evidence="8">
    <location>
        <begin position="332"/>
        <end position="349"/>
    </location>
</feature>
<feature type="topological domain" description="Cytoplasmic" evidence="8">
    <location>
        <begin position="350"/>
        <end position="783"/>
    </location>
</feature>
<feature type="transmembrane region" description="Helical" evidence="8">
    <location>
        <begin position="784"/>
        <end position="803"/>
    </location>
</feature>
<feature type="topological domain" description="Lumenal" evidence="8">
    <location>
        <begin position="804"/>
        <end position="813"/>
    </location>
</feature>
<feature type="transmembrane region" description="Helical" evidence="8">
    <location>
        <begin position="814"/>
        <end position="834"/>
    </location>
</feature>
<feature type="topological domain" description="Cytoplasmic" evidence="8">
    <location>
        <begin position="835"/>
        <end position="854"/>
    </location>
</feature>
<feature type="transmembrane region" description="Helical" evidence="8">
    <location>
        <begin position="855"/>
        <end position="877"/>
    </location>
</feature>
<feature type="topological domain" description="Lumenal" evidence="8">
    <location>
        <begin position="878"/>
        <end position="929"/>
    </location>
</feature>
<feature type="transmembrane region" description="Helical" evidence="8">
    <location>
        <begin position="930"/>
        <end position="949"/>
    </location>
</feature>
<feature type="topological domain" description="Cytoplasmic" evidence="8">
    <location>
        <begin position="950"/>
        <end position="963"/>
    </location>
</feature>
<feature type="transmembrane region" description="Helical" evidence="8">
    <location>
        <begin position="964"/>
        <end position="982"/>
    </location>
</feature>
<feature type="topological domain" description="Lumenal" evidence="8">
    <location>
        <begin position="983"/>
        <end position="997"/>
    </location>
</feature>
<feature type="transmembrane region" description="Helical" evidence="8">
    <location>
        <begin position="998"/>
        <end position="1018"/>
    </location>
</feature>
<feature type="topological domain" description="Cytoplasmic" evidence="8">
    <location>
        <begin position="1019"/>
        <end position="1035"/>
    </location>
</feature>
<feature type="region of interest" description="Disordered" evidence="9">
    <location>
        <begin position="1"/>
        <end position="41"/>
    </location>
</feature>
<feature type="compositionally biased region" description="Basic residues" evidence="9">
    <location>
        <begin position="26"/>
        <end position="40"/>
    </location>
</feature>
<feature type="active site" description="4-aspartylphosphate intermediate" evidence="3">
    <location>
        <position position="387"/>
    </location>
</feature>
<feature type="binding site" evidence="3">
    <location>
        <position position="340"/>
    </location>
    <ligand>
        <name>K(+)</name>
        <dbReference type="ChEBI" id="CHEBI:29103"/>
    </ligand>
</feature>
<feature type="binding site" evidence="3">
    <location>
        <position position="341"/>
    </location>
    <ligand>
        <name>K(+)</name>
        <dbReference type="ChEBI" id="CHEBI:29103"/>
    </ligand>
</feature>
<feature type="binding site" evidence="3">
    <location>
        <position position="343"/>
    </location>
    <ligand>
        <name>K(+)</name>
        <dbReference type="ChEBI" id="CHEBI:29103"/>
    </ligand>
</feature>
<feature type="binding site" evidence="3">
    <location>
        <position position="345"/>
    </location>
    <ligand>
        <name>K(+)</name>
        <dbReference type="ChEBI" id="CHEBI:29103"/>
    </ligand>
</feature>
<feature type="binding site" evidence="3">
    <location>
        <position position="387"/>
    </location>
    <ligand>
        <name>Mg(2+)</name>
        <dbReference type="ChEBI" id="CHEBI:18420"/>
    </ligand>
</feature>
<feature type="binding site" evidence="3">
    <location>
        <position position="389"/>
    </location>
    <ligand>
        <name>Mg(2+)</name>
        <dbReference type="ChEBI" id="CHEBI:18420"/>
    </ligand>
</feature>
<feature type="binding site" evidence="3">
    <location>
        <position position="728"/>
    </location>
    <ligand>
        <name>Mg(2+)</name>
        <dbReference type="ChEBI" id="CHEBI:18420"/>
    </ligand>
</feature>
<feature type="binding site" evidence="1">
    <location>
        <position position="732"/>
    </location>
    <ligand>
        <name>Mg(2+)</name>
        <dbReference type="ChEBI" id="CHEBI:18420"/>
    </ligand>
</feature>
<feature type="binding site" evidence="3">
    <location>
        <position position="797"/>
    </location>
    <ligand>
        <name>K(+)</name>
        <dbReference type="ChEBI" id="CHEBI:29103"/>
    </ligand>
</feature>
<feature type="binding site" evidence="3">
    <location>
        <position position="822"/>
    </location>
    <ligand>
        <name>K(+)</name>
        <dbReference type="ChEBI" id="CHEBI:29103"/>
    </ligand>
</feature>
<feature type="modified residue" description="Phosphotyrosine" evidence="3">
    <location>
        <position position="7"/>
    </location>
</feature>
<feature type="modified residue" description="Phosphotyrosine" evidence="3">
    <location>
        <position position="10"/>
    </location>
</feature>
<feature type="modified residue" description="Phosphoserine" evidence="3">
    <location>
        <position position="27"/>
    </location>
</feature>
<feature type="modified residue" description="Phosphoserine" evidence="7">
    <location>
        <position position="463"/>
    </location>
</feature>
<feature type="modified residue" description="Phosphoserine" evidence="5">
    <location>
        <position position="601"/>
    </location>
</feature>
<feature type="modified residue" description="Phosphoserine" evidence="2">
    <location>
        <position position="840"/>
    </location>
</feature>
<feature type="modified residue" description="Phosphoserine; by PKA" evidence="1">
    <location>
        <position position="954"/>
    </location>
</feature>
<keyword id="KW-0067">ATP-binding</keyword>
<keyword id="KW-1003">Cell membrane</keyword>
<keyword id="KW-0375">Hydrogen ion transport</keyword>
<keyword id="KW-0406">Ion transport</keyword>
<keyword id="KW-0460">Magnesium</keyword>
<keyword id="KW-0472">Membrane</keyword>
<keyword id="KW-0479">Metal-binding</keyword>
<keyword id="KW-0547">Nucleotide-binding</keyword>
<keyword id="KW-0597">Phosphoprotein</keyword>
<keyword id="KW-0630">Potassium</keyword>
<keyword id="KW-0633">Potassium transport</keyword>
<keyword id="KW-1185">Reference proteome</keyword>
<keyword id="KW-1278">Translocase</keyword>
<keyword id="KW-0812">Transmembrane</keyword>
<keyword id="KW-1133">Transmembrane helix</keyword>
<keyword id="KW-0813">Transport</keyword>
<accession>P27112</accession>
<gene>
    <name type="primary">ATP4A</name>
</gene>
<name>ATP4A_RABIT</name>
<sequence>MGKADNYELYSVELGPGPGGDMAAKMSKKKKAGGGGGKRKEKLENMKKEMEINDHQLSVAELEQKYQTSATKGLSARLAAELLLRDGPNALRPPRGTPEYVKFARQLAGGLQCLMWVAAAICLIAFAIQASEGDLTTDDNLYLALALIAVVVVTGCFGYYQEFKSTNIIASFKNLVPQQATVIRDGDKFQINADQLVVGDLVEMKGGDRVPADIRILAAQGCKVDNSSLTGESEPQTRSPECTHESPLETRNIAFFSTMCLEGTAQGLVVNTGDRTIIGRIASLASGVENEKTPIAIEIEHFVDIIAGLAILFGATFFVVAMCIGYTFLRAMVFFMAIVVAYVPEGLLATVTVCLSLTAKRLASKNCVVKNLEAVETLGSTSVICSDKTGTLTQNRMTVSHLWFDNHIHTADTTEDQSGQTFDQSSETWRALCRVLTLCNRAAFKSGQDAVPVPKRIVIGDASETALLKFSELTLGNAMGYRDRFPKVCEIPFNSTNKFQLSIHTLEDPRDPRHLLVMKGAPERVLERCSSILIKGQELPLDEQWREAFQTAYLSLGGLGERVLGFCHLYLSEKDYPPGYAFDVEAMNFPSSGLCFAGLVSMIDPPRATVPDAVLKCRTAGIRVIMVTGDHPITAKAIAASVGIISEGSETVEDIAARLRVPVDQVNRKDARACVINGMQLKDMDPSELVEALRTHPEMVFARTSPQQKLVIVESCQRLGAIVAVTGDGVNDSPALKKADIGVAMGIAGSDAAKNAADMILLDDNFASIVTGVEQGRLIFDNLKKSIAYTLTKNIPELTPYLIYITVSVPLPLGCITILFIELCTDIFPSVSLAYEKAESDIMHLRPRNPKRDRLVNEPLAAYSYFQIGAIQSFAGFTDYFTAMAQEGWFPLLCVGLRPQWEDHHLQDLQDSYGQEWTFGQRLYQQYTCYTVFFISIEMCQIADVLIRKTRRLSAFQQGFFRNRILVIAIVFQVCIGCFLCYCPGMPNIFNFMPIRFQWWLVPMPFGLLIFVYDEIRKLGVRCCPGSWWDQELYY</sequence>
<protein>
    <recommendedName>
        <fullName>Potassium-transporting ATPase alpha chain 1</fullName>
        <ecNumber evidence="12">7.2.2.19</ecNumber>
    </recommendedName>
    <alternativeName>
        <fullName evidence="13">Gastric H(+)/K(+) ATPase subunit alpha</fullName>
    </alternativeName>
    <alternativeName>
        <fullName>Proton pump</fullName>
    </alternativeName>
</protein>
<evidence type="ECO:0000250" key="1"/>
<evidence type="ECO:0000250" key="2">
    <source>
        <dbReference type="UniProtKB" id="P09626"/>
    </source>
</evidence>
<evidence type="ECO:0000250" key="3">
    <source>
        <dbReference type="UniProtKB" id="P19156"/>
    </source>
</evidence>
<evidence type="ECO:0000250" key="4">
    <source>
        <dbReference type="UniProtKB" id="P20648"/>
    </source>
</evidence>
<evidence type="ECO:0000250" key="5">
    <source>
        <dbReference type="UniProtKB" id="P50993"/>
    </source>
</evidence>
<evidence type="ECO:0000250" key="6">
    <source>
        <dbReference type="UniProtKB" id="Q64436"/>
    </source>
</evidence>
<evidence type="ECO:0000250" key="7">
    <source>
        <dbReference type="UniProtKB" id="Q6PIE5"/>
    </source>
</evidence>
<evidence type="ECO:0000255" key="8"/>
<evidence type="ECO:0000256" key="9">
    <source>
        <dbReference type="SAM" id="MobiDB-lite"/>
    </source>
</evidence>
<evidence type="ECO:0000269" key="10">
    <source>
    </source>
</evidence>
<evidence type="ECO:0000269" key="11">
    <source>
    </source>
</evidence>
<evidence type="ECO:0000269" key="12">
    <source>
    </source>
</evidence>
<evidence type="ECO:0000303" key="13">
    <source>
    </source>
</evidence>
<evidence type="ECO:0000305" key="14"/>
<evidence type="ECO:0000305" key="15">
    <source>
    </source>
</evidence>
<evidence type="ECO:0000305" key="16">
    <source>
    </source>
</evidence>